<dbReference type="EC" id="2.7.2.11" evidence="1"/>
<dbReference type="EMBL" id="AP010918">
    <property type="protein sequence ID" value="BAH26735.1"/>
    <property type="molecule type" value="Genomic_DNA"/>
</dbReference>
<dbReference type="RefSeq" id="WP_003412568.1">
    <property type="nucleotide sequence ID" value="NZ_CP014566.1"/>
</dbReference>
<dbReference type="SMR" id="C1AEQ6"/>
<dbReference type="KEGG" id="mbt:JTY_2453"/>
<dbReference type="HOGENOM" id="CLU_025400_2_0_11"/>
<dbReference type="UniPathway" id="UPA00098">
    <property type="reaction ID" value="UER00359"/>
</dbReference>
<dbReference type="GO" id="GO:0005829">
    <property type="term" value="C:cytosol"/>
    <property type="evidence" value="ECO:0007669"/>
    <property type="project" value="TreeGrafter"/>
</dbReference>
<dbReference type="GO" id="GO:0005524">
    <property type="term" value="F:ATP binding"/>
    <property type="evidence" value="ECO:0007669"/>
    <property type="project" value="UniProtKB-KW"/>
</dbReference>
<dbReference type="GO" id="GO:0004349">
    <property type="term" value="F:glutamate 5-kinase activity"/>
    <property type="evidence" value="ECO:0007669"/>
    <property type="project" value="UniProtKB-UniRule"/>
</dbReference>
<dbReference type="GO" id="GO:0003723">
    <property type="term" value="F:RNA binding"/>
    <property type="evidence" value="ECO:0007669"/>
    <property type="project" value="InterPro"/>
</dbReference>
<dbReference type="GO" id="GO:0055129">
    <property type="term" value="P:L-proline biosynthetic process"/>
    <property type="evidence" value="ECO:0007669"/>
    <property type="project" value="UniProtKB-UniRule"/>
</dbReference>
<dbReference type="CDD" id="cd04242">
    <property type="entry name" value="AAK_G5K_ProB"/>
    <property type="match status" value="1"/>
</dbReference>
<dbReference type="CDD" id="cd21157">
    <property type="entry name" value="PUA_G5K"/>
    <property type="match status" value="1"/>
</dbReference>
<dbReference type="FunFam" id="3.40.1160.10:FF:000018">
    <property type="entry name" value="Glutamate 5-kinase"/>
    <property type="match status" value="1"/>
</dbReference>
<dbReference type="Gene3D" id="3.40.1160.10">
    <property type="entry name" value="Acetylglutamate kinase-like"/>
    <property type="match status" value="1"/>
</dbReference>
<dbReference type="Gene3D" id="2.30.130.10">
    <property type="entry name" value="PUA domain"/>
    <property type="match status" value="1"/>
</dbReference>
<dbReference type="HAMAP" id="MF_00456">
    <property type="entry name" value="ProB"/>
    <property type="match status" value="1"/>
</dbReference>
<dbReference type="InterPro" id="IPR036393">
    <property type="entry name" value="AceGlu_kinase-like_sf"/>
</dbReference>
<dbReference type="InterPro" id="IPR001048">
    <property type="entry name" value="Asp/Glu/Uridylate_kinase"/>
</dbReference>
<dbReference type="InterPro" id="IPR041739">
    <property type="entry name" value="G5K_ProB"/>
</dbReference>
<dbReference type="InterPro" id="IPR001057">
    <property type="entry name" value="Glu/AcGlu_kinase"/>
</dbReference>
<dbReference type="InterPro" id="IPR011529">
    <property type="entry name" value="Glu_5kinase"/>
</dbReference>
<dbReference type="InterPro" id="IPR005715">
    <property type="entry name" value="Glu_5kinase/COase_Synthase"/>
</dbReference>
<dbReference type="InterPro" id="IPR019797">
    <property type="entry name" value="Glutamate_5-kinase_CS"/>
</dbReference>
<dbReference type="InterPro" id="IPR002478">
    <property type="entry name" value="PUA"/>
</dbReference>
<dbReference type="InterPro" id="IPR015947">
    <property type="entry name" value="PUA-like_sf"/>
</dbReference>
<dbReference type="InterPro" id="IPR036974">
    <property type="entry name" value="PUA_sf"/>
</dbReference>
<dbReference type="NCBIfam" id="TIGR01027">
    <property type="entry name" value="proB"/>
    <property type="match status" value="1"/>
</dbReference>
<dbReference type="PANTHER" id="PTHR43654">
    <property type="entry name" value="GLUTAMATE 5-KINASE"/>
    <property type="match status" value="1"/>
</dbReference>
<dbReference type="PANTHER" id="PTHR43654:SF1">
    <property type="entry name" value="ISOPENTENYL PHOSPHATE KINASE"/>
    <property type="match status" value="1"/>
</dbReference>
<dbReference type="Pfam" id="PF00696">
    <property type="entry name" value="AA_kinase"/>
    <property type="match status" value="1"/>
</dbReference>
<dbReference type="Pfam" id="PF01472">
    <property type="entry name" value="PUA"/>
    <property type="match status" value="1"/>
</dbReference>
<dbReference type="PIRSF" id="PIRSF000729">
    <property type="entry name" value="GK"/>
    <property type="match status" value="1"/>
</dbReference>
<dbReference type="PRINTS" id="PR00474">
    <property type="entry name" value="GLU5KINASE"/>
</dbReference>
<dbReference type="SMART" id="SM00359">
    <property type="entry name" value="PUA"/>
    <property type="match status" value="1"/>
</dbReference>
<dbReference type="SUPFAM" id="SSF53633">
    <property type="entry name" value="Carbamate kinase-like"/>
    <property type="match status" value="1"/>
</dbReference>
<dbReference type="SUPFAM" id="SSF88697">
    <property type="entry name" value="PUA domain-like"/>
    <property type="match status" value="1"/>
</dbReference>
<dbReference type="PROSITE" id="PS00902">
    <property type="entry name" value="GLUTAMATE_5_KINASE"/>
    <property type="match status" value="1"/>
</dbReference>
<dbReference type="PROSITE" id="PS50890">
    <property type="entry name" value="PUA"/>
    <property type="match status" value="1"/>
</dbReference>
<comment type="function">
    <text evidence="1">Catalyzes the transfer of a phosphate group to glutamate to form L-glutamate 5-phosphate.</text>
</comment>
<comment type="catalytic activity">
    <reaction evidence="1">
        <text>L-glutamate + ATP = L-glutamyl 5-phosphate + ADP</text>
        <dbReference type="Rhea" id="RHEA:14877"/>
        <dbReference type="ChEBI" id="CHEBI:29985"/>
        <dbReference type="ChEBI" id="CHEBI:30616"/>
        <dbReference type="ChEBI" id="CHEBI:58274"/>
        <dbReference type="ChEBI" id="CHEBI:456216"/>
        <dbReference type="EC" id="2.7.2.11"/>
    </reaction>
</comment>
<comment type="pathway">
    <text evidence="1">Amino-acid biosynthesis; L-proline biosynthesis; L-glutamate 5-semialdehyde from L-glutamate: step 1/2.</text>
</comment>
<comment type="subcellular location">
    <subcellularLocation>
        <location evidence="1">Cytoplasm</location>
    </subcellularLocation>
</comment>
<comment type="similarity">
    <text evidence="1">Belongs to the glutamate 5-kinase family.</text>
</comment>
<feature type="chain" id="PRO_1000193699" description="Glutamate 5-kinase">
    <location>
        <begin position="1"/>
        <end position="376"/>
    </location>
</feature>
<feature type="domain" description="PUA" evidence="1">
    <location>
        <begin position="280"/>
        <end position="358"/>
    </location>
</feature>
<feature type="binding site" evidence="1">
    <location>
        <position position="18"/>
    </location>
    <ligand>
        <name>ATP</name>
        <dbReference type="ChEBI" id="CHEBI:30616"/>
    </ligand>
</feature>
<feature type="binding site" evidence="1">
    <location>
        <position position="58"/>
    </location>
    <ligand>
        <name>substrate</name>
    </ligand>
</feature>
<feature type="binding site" evidence="1">
    <location>
        <position position="145"/>
    </location>
    <ligand>
        <name>substrate</name>
    </ligand>
</feature>
<feature type="binding site" evidence="1">
    <location>
        <position position="157"/>
    </location>
    <ligand>
        <name>substrate</name>
    </ligand>
</feature>
<feature type="binding site" evidence="1">
    <location>
        <begin position="177"/>
        <end position="178"/>
    </location>
    <ligand>
        <name>ATP</name>
        <dbReference type="ChEBI" id="CHEBI:30616"/>
    </ligand>
</feature>
<feature type="binding site" evidence="1">
    <location>
        <begin position="218"/>
        <end position="224"/>
    </location>
    <ligand>
        <name>ATP</name>
        <dbReference type="ChEBI" id="CHEBI:30616"/>
    </ligand>
</feature>
<accession>C1AEQ6</accession>
<proteinExistence type="inferred from homology"/>
<reference key="1">
    <citation type="journal article" date="2009" name="Vaccine">
        <title>Whole genome sequence analysis of Mycobacterium bovis bacillus Calmette-Guerin (BCG) Tokyo 172: a comparative study of BCG vaccine substrains.</title>
        <authorList>
            <person name="Seki M."/>
            <person name="Honda I."/>
            <person name="Fujita I."/>
            <person name="Yano I."/>
            <person name="Yamamoto S."/>
            <person name="Koyama A."/>
        </authorList>
    </citation>
    <scope>NUCLEOTIDE SEQUENCE [LARGE SCALE GENOMIC DNA]</scope>
    <source>
        <strain>BCG / Tokyo 172 / ATCC 35737 / TMC 1019</strain>
    </source>
</reference>
<evidence type="ECO:0000255" key="1">
    <source>
        <dbReference type="HAMAP-Rule" id="MF_00456"/>
    </source>
</evidence>
<keyword id="KW-0028">Amino-acid biosynthesis</keyword>
<keyword id="KW-0067">ATP-binding</keyword>
<keyword id="KW-0963">Cytoplasm</keyword>
<keyword id="KW-0418">Kinase</keyword>
<keyword id="KW-0547">Nucleotide-binding</keyword>
<keyword id="KW-0641">Proline biosynthesis</keyword>
<keyword id="KW-0808">Transferase</keyword>
<organism>
    <name type="scientific">Mycobacterium bovis (strain BCG / Tokyo 172 / ATCC 35737 / TMC 1019)</name>
    <dbReference type="NCBI Taxonomy" id="561275"/>
    <lineage>
        <taxon>Bacteria</taxon>
        <taxon>Bacillati</taxon>
        <taxon>Actinomycetota</taxon>
        <taxon>Actinomycetes</taxon>
        <taxon>Mycobacteriales</taxon>
        <taxon>Mycobacteriaceae</taxon>
        <taxon>Mycobacterium</taxon>
        <taxon>Mycobacterium tuberculosis complex</taxon>
    </lineage>
</organism>
<protein>
    <recommendedName>
        <fullName evidence="1">Glutamate 5-kinase</fullName>
        <ecNumber evidence="1">2.7.2.11</ecNumber>
    </recommendedName>
    <alternativeName>
        <fullName evidence="1">Gamma-glutamyl kinase</fullName>
        <shortName evidence="1">GK</shortName>
    </alternativeName>
</protein>
<name>PROB_MYCBT</name>
<sequence length="376" mass="38804">MRSPHRDAIRTARGLVVKVGTTALTTPSGMFDAGRLAGLAEAVERRMKAGSDVVIVSSGAIAAGIEPLGLSRRPKDLATKQAAASVGQVALVNSWSAAFARYGRTVGQVLLTAHDISMRVQHTNAQRTLDRLRALHAVAIVNENDTVATNEIRFGDNDRLSALVAHLVGADALVLLSDIDGLYDCDPRKTADATFIPEVSGPADLDGVVAGRSSHLGTGGMASKVSAALLAADAGVPVLLAPAADAATALADASVGTVFAARPARLSARRFWVRYAAEATGALTLDAGAVRAVVRQRRSLLAAGITAVSGRFCGGDVVELRAPDAAMVARGVVAYDASELATMVGRSTSELPGELRRPVVHADDLVAVSAKQAKQV</sequence>
<gene>
    <name evidence="1" type="primary">proB</name>
    <name type="ordered locus">JTY_2453</name>
</gene>